<accession>Q8WMN1</accession>
<proteinExistence type="evidence at transcript level"/>
<keyword id="KW-0007">Acetylation</keyword>
<keyword id="KW-1003">Cell membrane</keyword>
<keyword id="KW-0325">Glycoprotein</keyword>
<keyword id="KW-0472">Membrane</keyword>
<keyword id="KW-1185">Reference proteome</keyword>
<keyword id="KW-0762">Sugar transport</keyword>
<keyword id="KW-0812">Transmembrane</keyword>
<keyword id="KW-1133">Transmembrane helix</keyword>
<keyword id="KW-0813">Transport</keyword>
<evidence type="ECO:0000250" key="1">
    <source>
        <dbReference type="UniProtKB" id="P22732"/>
    </source>
</evidence>
<evidence type="ECO:0000250" key="2">
    <source>
        <dbReference type="UniProtKB" id="P43427"/>
    </source>
</evidence>
<evidence type="ECO:0000250" key="3">
    <source>
        <dbReference type="UniProtKB" id="Q9WV38"/>
    </source>
</evidence>
<evidence type="ECO:0000255" key="4"/>
<evidence type="ECO:0000303" key="5">
    <source ref="1"/>
</evidence>
<evidence type="ECO:0000305" key="6"/>
<comment type="function">
    <text evidence="2 3">Functions as a fructose transporter that has only low activity with other monosaccharides. Can mediate the uptake of deoxyglucose, but with low efficiency. Essential for fructose uptake in the small intestine. Plays a role in the regulation of salt uptake and blood pressure in response to dietary fructose. Required for the development of high blood pressure in response to high dietary fructose intake.</text>
</comment>
<comment type="catalytic activity">
    <reaction evidence="1">
        <text>D-fructose(out) = D-fructose(in)</text>
        <dbReference type="Rhea" id="RHEA:60372"/>
        <dbReference type="ChEBI" id="CHEBI:37721"/>
    </reaction>
</comment>
<comment type="subcellular location">
    <subcellularLocation>
        <location evidence="3">Apical cell membrane</location>
        <topology evidence="3">Multi-pass membrane protein</topology>
    </subcellularLocation>
    <subcellularLocation>
        <location evidence="3">Cell membrane</location>
        <topology evidence="3">Multi-pass membrane protein</topology>
    </subcellularLocation>
    <subcellularLocation>
        <location evidence="2">Cell membrane</location>
        <location evidence="2">Sarcolemma</location>
    </subcellularLocation>
    <text evidence="3">Localized on the apical membrane of jejunum villi, but also on lateral plasma membranes of the villi. Transport to the cell membrane is dependent on RAB11A.</text>
</comment>
<comment type="similarity">
    <text evidence="6">Belongs to the major facilitator superfamily. Sugar transporter (TC 2.A.1.1) family. Glucose transporter subfamily.</text>
</comment>
<name>GTR5_SHEEP</name>
<gene>
    <name evidence="1" type="primary">SLC2A5</name>
    <name evidence="5" type="synonym">GLUT5</name>
</gene>
<dbReference type="EMBL" id="AJ315928">
    <property type="protein sequence ID" value="CAC86964.1"/>
    <property type="molecule type" value="mRNA"/>
</dbReference>
<dbReference type="RefSeq" id="NP_001009451.1">
    <property type="nucleotide sequence ID" value="NM_001009451.1"/>
</dbReference>
<dbReference type="SMR" id="Q8WMN1"/>
<dbReference type="STRING" id="9940.ENSOARP00000009608"/>
<dbReference type="GlyCosmos" id="Q8WMN1">
    <property type="glycosylation" value="1 site, No reported glycans"/>
</dbReference>
<dbReference type="PaxDb" id="9940-ENSOARP00000009608"/>
<dbReference type="Ensembl" id="ENSOART00220037209">
    <property type="protein sequence ID" value="ENSOARP00220020355"/>
    <property type="gene ID" value="ENSOARG00220022272"/>
</dbReference>
<dbReference type="GeneID" id="443507"/>
<dbReference type="KEGG" id="oas:443507"/>
<dbReference type="CTD" id="6518"/>
<dbReference type="eggNOG" id="KOG0569">
    <property type="taxonomic scope" value="Eukaryota"/>
</dbReference>
<dbReference type="OrthoDB" id="4540492at2759"/>
<dbReference type="Proteomes" id="UP000002356">
    <property type="component" value="Unplaced"/>
</dbReference>
<dbReference type="GO" id="GO:0016324">
    <property type="term" value="C:apical plasma membrane"/>
    <property type="evidence" value="ECO:0000250"/>
    <property type="project" value="UniProtKB"/>
</dbReference>
<dbReference type="GO" id="GO:0005886">
    <property type="term" value="C:plasma membrane"/>
    <property type="evidence" value="ECO:0000250"/>
    <property type="project" value="UniProtKB"/>
</dbReference>
<dbReference type="GO" id="GO:0042383">
    <property type="term" value="C:sarcolemma"/>
    <property type="evidence" value="ECO:0007669"/>
    <property type="project" value="UniProtKB-SubCell"/>
</dbReference>
<dbReference type="GO" id="GO:0055056">
    <property type="term" value="F:D-glucose transmembrane transporter activity"/>
    <property type="evidence" value="ECO:0007669"/>
    <property type="project" value="TreeGrafter"/>
</dbReference>
<dbReference type="GO" id="GO:0005353">
    <property type="term" value="F:fructose transmembrane transporter activity"/>
    <property type="evidence" value="ECO:0000250"/>
    <property type="project" value="UniProtKB"/>
</dbReference>
<dbReference type="GO" id="GO:0071332">
    <property type="term" value="P:cellular response to fructose stimulus"/>
    <property type="evidence" value="ECO:0000250"/>
    <property type="project" value="UniProtKB"/>
</dbReference>
<dbReference type="GO" id="GO:0046323">
    <property type="term" value="P:D-glucose import"/>
    <property type="evidence" value="ECO:0007669"/>
    <property type="project" value="TreeGrafter"/>
</dbReference>
<dbReference type="GO" id="GO:0070837">
    <property type="term" value="P:dehydroascorbic acid transport"/>
    <property type="evidence" value="ECO:0007669"/>
    <property type="project" value="TreeGrafter"/>
</dbReference>
<dbReference type="CDD" id="cd17432">
    <property type="entry name" value="MFS_GLUT_Class2"/>
    <property type="match status" value="1"/>
</dbReference>
<dbReference type="FunFam" id="1.20.1250.20:FF:001511">
    <property type="entry name" value="Solute carrier family 2, facilitated glucose transporter member 5"/>
    <property type="match status" value="1"/>
</dbReference>
<dbReference type="Gene3D" id="1.20.1250.20">
    <property type="entry name" value="MFS general substrate transporter like domains"/>
    <property type="match status" value="1"/>
</dbReference>
<dbReference type="InterPro" id="IPR002442">
    <property type="entry name" value="Fru_transpt_5"/>
</dbReference>
<dbReference type="InterPro" id="IPR045263">
    <property type="entry name" value="GLUT"/>
</dbReference>
<dbReference type="InterPro" id="IPR020846">
    <property type="entry name" value="MFS_dom"/>
</dbReference>
<dbReference type="InterPro" id="IPR005828">
    <property type="entry name" value="MFS_sugar_transport-like"/>
</dbReference>
<dbReference type="InterPro" id="IPR036259">
    <property type="entry name" value="MFS_trans_sf"/>
</dbReference>
<dbReference type="InterPro" id="IPR003663">
    <property type="entry name" value="Sugar/inositol_transpt"/>
</dbReference>
<dbReference type="InterPro" id="IPR005829">
    <property type="entry name" value="Sugar_transporter_CS"/>
</dbReference>
<dbReference type="NCBIfam" id="TIGR00879">
    <property type="entry name" value="SP"/>
    <property type="match status" value="1"/>
</dbReference>
<dbReference type="PANTHER" id="PTHR23503">
    <property type="entry name" value="SOLUTE CARRIER FAMILY 2"/>
    <property type="match status" value="1"/>
</dbReference>
<dbReference type="PANTHER" id="PTHR23503:SF32">
    <property type="entry name" value="SOLUTE CARRIER FAMILY 2, FACILITATED GLUCOSE TRANSPORTER MEMBER 5"/>
    <property type="match status" value="1"/>
</dbReference>
<dbReference type="Pfam" id="PF00083">
    <property type="entry name" value="Sugar_tr"/>
    <property type="match status" value="1"/>
</dbReference>
<dbReference type="PRINTS" id="PR01194">
    <property type="entry name" value="GLUCTRSPORT5"/>
</dbReference>
<dbReference type="PRINTS" id="PR00171">
    <property type="entry name" value="SUGRTRNSPORT"/>
</dbReference>
<dbReference type="SUPFAM" id="SSF103473">
    <property type="entry name" value="MFS general substrate transporter"/>
    <property type="match status" value="1"/>
</dbReference>
<dbReference type="PROSITE" id="PS50850">
    <property type="entry name" value="MFS"/>
    <property type="match status" value="1"/>
</dbReference>
<dbReference type="PROSITE" id="PS00216">
    <property type="entry name" value="SUGAR_TRANSPORT_1"/>
    <property type="match status" value="1"/>
</dbReference>
<dbReference type="PROSITE" id="PS00217">
    <property type="entry name" value="SUGAR_TRANSPORT_2"/>
    <property type="match status" value="1"/>
</dbReference>
<feature type="chain" id="PRO_0000317271" description="Solute carrier family 2, facilitated glucose transporter member 5">
    <location>
        <begin position="1"/>
        <end position="501"/>
    </location>
</feature>
<feature type="topological domain" description="Cytoplasmic" evidence="2">
    <location>
        <begin position="1"/>
        <end position="18"/>
    </location>
</feature>
<feature type="transmembrane region" description="Helical; Name=1" evidence="2">
    <location>
        <begin position="19"/>
        <end position="39"/>
    </location>
</feature>
<feature type="topological domain" description="Extracellular" evidence="2">
    <location>
        <begin position="40"/>
        <end position="68"/>
    </location>
</feature>
<feature type="transmembrane region" description="Helical; Name=2" evidence="2">
    <location>
        <begin position="69"/>
        <end position="91"/>
    </location>
</feature>
<feature type="topological domain" description="Cytoplasmic" evidence="2">
    <location>
        <begin position="92"/>
        <end position="98"/>
    </location>
</feature>
<feature type="transmembrane region" description="Helical; Name=3" evidence="2">
    <location>
        <begin position="99"/>
        <end position="119"/>
    </location>
</feature>
<feature type="topological domain" description="Extracellular" evidence="2">
    <location>
        <begin position="120"/>
        <end position="126"/>
    </location>
</feature>
<feature type="transmembrane region" description="Helical; Name=4" evidence="2">
    <location>
        <begin position="127"/>
        <end position="149"/>
    </location>
</feature>
<feature type="topological domain" description="Cytoplasmic" evidence="2">
    <location>
        <begin position="150"/>
        <end position="161"/>
    </location>
</feature>
<feature type="transmembrane region" description="Helical; Name=5" evidence="2">
    <location>
        <begin position="162"/>
        <end position="182"/>
    </location>
</feature>
<feature type="topological domain" description="Extracellular" evidence="2">
    <location>
        <begin position="183"/>
        <end position="192"/>
    </location>
</feature>
<feature type="transmembrane region" description="Helical; Name=6" evidence="2">
    <location>
        <begin position="193"/>
        <end position="213"/>
    </location>
</feature>
<feature type="topological domain" description="Cytoplasmic" evidence="2">
    <location>
        <begin position="214"/>
        <end position="277"/>
    </location>
</feature>
<feature type="transmembrane region" description="Helical; Name=7" evidence="2">
    <location>
        <begin position="278"/>
        <end position="298"/>
    </location>
</feature>
<feature type="topological domain" description="Extracellular" evidence="2">
    <location>
        <begin position="299"/>
        <end position="313"/>
    </location>
</feature>
<feature type="transmembrane region" description="Helical; Name=8" evidence="2">
    <location>
        <begin position="314"/>
        <end position="334"/>
    </location>
</feature>
<feature type="topological domain" description="Cytoplasmic" evidence="2">
    <location>
        <begin position="335"/>
        <end position="342"/>
    </location>
</feature>
<feature type="transmembrane region" description="Helical; Name=9" evidence="2">
    <location>
        <begin position="343"/>
        <end position="363"/>
    </location>
</feature>
<feature type="topological domain" description="Extracellular" evidence="2">
    <location>
        <begin position="364"/>
        <end position="371"/>
    </location>
</feature>
<feature type="transmembrane region" description="Helical; Name=10" evidence="2">
    <location>
        <begin position="372"/>
        <end position="394"/>
    </location>
</feature>
<feature type="topological domain" description="Cytoplasmic" evidence="2">
    <location>
        <begin position="395"/>
        <end position="412"/>
    </location>
</feature>
<feature type="transmembrane region" description="Helical; Name=11" evidence="2">
    <location>
        <begin position="413"/>
        <end position="433"/>
    </location>
</feature>
<feature type="topological domain" description="Extracellular" evidence="2">
    <location>
        <begin position="434"/>
        <end position="439"/>
    </location>
</feature>
<feature type="transmembrane region" description="Helical; Name=12" evidence="2">
    <location>
        <begin position="440"/>
        <end position="460"/>
    </location>
</feature>
<feature type="topological domain" description="Cytoplasmic" evidence="2">
    <location>
        <begin position="461"/>
        <end position="501"/>
    </location>
</feature>
<feature type="binding site" evidence="2">
    <location>
        <position position="32"/>
    </location>
    <ligand>
        <name>D-fructose</name>
        <dbReference type="ChEBI" id="CHEBI:37721"/>
    </ligand>
</feature>
<feature type="binding site" evidence="2">
    <location>
        <position position="167"/>
    </location>
    <ligand>
        <name>D-fructose</name>
        <dbReference type="ChEBI" id="CHEBI:37721"/>
    </ligand>
</feature>
<feature type="binding site" evidence="2">
    <location>
        <position position="288"/>
    </location>
    <ligand>
        <name>D-fructose</name>
        <dbReference type="ChEBI" id="CHEBI:37721"/>
    </ligand>
</feature>
<feature type="binding site" evidence="2">
    <location>
        <begin position="296"/>
        <end position="298"/>
    </location>
    <ligand>
        <name>D-fructose</name>
        <dbReference type="ChEBI" id="CHEBI:37721"/>
    </ligand>
</feature>
<feature type="binding site" evidence="2">
    <location>
        <position position="387"/>
    </location>
    <ligand>
        <name>D-fructose</name>
        <dbReference type="ChEBI" id="CHEBI:37721"/>
    </ligand>
</feature>
<feature type="binding site" evidence="2">
    <location>
        <begin position="419"/>
        <end position="420"/>
    </location>
    <ligand>
        <name>D-fructose</name>
        <dbReference type="ChEBI" id="CHEBI:37721"/>
    </ligand>
</feature>
<feature type="modified residue" description="N-acetylmethionine" evidence="1">
    <location>
        <position position="1"/>
    </location>
</feature>
<feature type="glycosylation site" description="N-linked (GlcNAc...) asparagine" evidence="4">
    <location>
        <position position="51"/>
    </location>
</feature>
<protein>
    <recommendedName>
        <fullName evidence="6">Solute carrier family 2, facilitated glucose transporter member 5</fullName>
    </recommendedName>
    <alternativeName>
        <fullName evidence="6">Fructose transporter</fullName>
    </alternativeName>
    <alternativeName>
        <fullName evidence="5">Glucose transporter type 5, small intestine</fullName>
        <shortName evidence="5">GLUT-5</shortName>
    </alternativeName>
</protein>
<sequence length="501" mass="55547">MEPQDPVKREGRLTPVIVLATLIAAFGSSFQYGYNVATINSPSEFMKDFYNYTYYDRVGEYMNEFYLTLLWSVTVSMFPFGGFLGSLMVGPLVNNLGRKGTLLFNNIFSIVPALLMGFSDLAKSFEMIIVARVLVGICAGLSSNVVPMYLGELAPKNWRGALGVVPQLFITIGILVAQIFGLRSLLANEEGWPILLGLTGIPAVLQLLFLPFFPESPRYLLIQKKDEEAAKRALRRLRGWHDVDAEIEEILEEDRAEKAAGFISVLKLFKMRSLRWQVISIIVLMAGQQLSGVNAIYYYADQIYLSAGVKEDDVQYVTAGTGAVNVLITVCAIFVVELMGRRFLLLLGFSVCFTACCVLTGALAMQDVISWMPYVSIACVISYVIGHALGPSPIPALLVTEIFLQSSRPAAYMVAGTVHWLSNFTVGLVFPFIQVGLGAYSFVIFAVICFLTTVYIFLIIPETKSKTFIEINQIFIKMNKVPGVHPEKEELKEFPPSTARQ</sequence>
<reference key="1">
    <citation type="submission" date="2001-08" db="EMBL/GenBank/DDBJ databases">
        <title>Nutrient regulation of Glut5 in sheep intestine.</title>
        <authorList>
            <person name="Wood I.S."/>
            <person name="Castano-Merediz E.F."/>
            <person name="Dyer J."/>
            <person name="Shirazi-Beechey S.P."/>
        </authorList>
    </citation>
    <scope>NUCLEOTIDE SEQUENCE [MRNA]</scope>
    <source>
        <tissue>Small intestine</tissue>
    </source>
</reference>
<organism>
    <name type="scientific">Ovis aries</name>
    <name type="common">Sheep</name>
    <dbReference type="NCBI Taxonomy" id="9940"/>
    <lineage>
        <taxon>Eukaryota</taxon>
        <taxon>Metazoa</taxon>
        <taxon>Chordata</taxon>
        <taxon>Craniata</taxon>
        <taxon>Vertebrata</taxon>
        <taxon>Euteleostomi</taxon>
        <taxon>Mammalia</taxon>
        <taxon>Eutheria</taxon>
        <taxon>Laurasiatheria</taxon>
        <taxon>Artiodactyla</taxon>
        <taxon>Ruminantia</taxon>
        <taxon>Pecora</taxon>
        <taxon>Bovidae</taxon>
        <taxon>Caprinae</taxon>
        <taxon>Ovis</taxon>
    </lineage>
</organism>